<organism>
    <name type="scientific">Hamiltonella defensa subsp. Acyrthosiphon pisum (strain 5AT)</name>
    <dbReference type="NCBI Taxonomy" id="572265"/>
    <lineage>
        <taxon>Bacteria</taxon>
        <taxon>Pseudomonadati</taxon>
        <taxon>Pseudomonadota</taxon>
        <taxon>Gammaproteobacteria</taxon>
        <taxon>Enterobacterales</taxon>
        <taxon>Enterobacteriaceae</taxon>
        <taxon>aphid secondary symbionts</taxon>
        <taxon>Candidatus Hamiltonella</taxon>
    </lineage>
</organism>
<keyword id="KW-0030">Aminoacyl-tRNA synthetase</keyword>
<keyword id="KW-0067">ATP-binding</keyword>
<keyword id="KW-0963">Cytoplasm</keyword>
<keyword id="KW-0436">Ligase</keyword>
<keyword id="KW-0547">Nucleotide-binding</keyword>
<keyword id="KW-0648">Protein biosynthesis</keyword>
<protein>
    <recommendedName>
        <fullName evidence="1">Glycine--tRNA ligase beta subunit</fullName>
        <ecNumber evidence="1">6.1.1.14</ecNumber>
    </recommendedName>
    <alternativeName>
        <fullName evidence="1">Glycyl-tRNA synthetase beta subunit</fullName>
        <shortName evidence="1">GlyRS</shortName>
    </alternativeName>
</protein>
<sequence>MTHQTFLVEIGTEELPPKSLRSLVESFAFYLTQELNKAHLDHGEVTWFATPRRLAVKVACLSTIQKDQKIEKRGPAIAQAYDVDGNPTKAATAWARSCGISLDQAKSLVTDKGEWLLYSWVLPGKSASSLLAEKVKIALSQLPISKLMSWGIHEAKFVRPVHTVTLLLGDELISGIIFGVNSNRKILGHRFMGEPSFIIEHADQYPQILLEKGKVMADFFLRKTQIKTDIEKAAEKIGAIADISDNLLEEVTSLVEWPVVHTAQFEKKFLEVPSEALVHTMKNDQKYFPVYNKSGQLMPYFIFVANILSQDPPQLIFGNEKVIRPRFADAQFFFETDLKQSLEERLPSLKTILFQKELGTLYEKVQRVQALSGWIASQIGANVEYSIKAGLLSKSDLMTNMVCEFPETQGIMGMHYARYHHEPDEVARAIYEQYQPRFSGDNLPSTLVACSVAIADKMDTLTGIFGINQLPKGDKDPFGLRRAALGVLRIIVEKNLPLDLQTLISEAVRLYGNKLKNSNLIDQIIEFMLGRFRSWYQEAGHGIDSIQAVLARRPTKPADFNARIQAVTYFRTMNEARALCASNKRVSNILSQSLDIPKNSIDTGLLKEPAEIELAQNILELEKKLAPFFVAGLYKDALLELVALREPLDIFFKQVMVMVPDQDLRLNRLALLNKLRALFLRVADISFLQ</sequence>
<proteinExistence type="inferred from homology"/>
<gene>
    <name evidence="1" type="primary">glyS</name>
    <name type="ordered locus">HDEF_0612</name>
</gene>
<accession>C4K460</accession>
<comment type="catalytic activity">
    <reaction evidence="1">
        <text>tRNA(Gly) + glycine + ATP = glycyl-tRNA(Gly) + AMP + diphosphate</text>
        <dbReference type="Rhea" id="RHEA:16013"/>
        <dbReference type="Rhea" id="RHEA-COMP:9664"/>
        <dbReference type="Rhea" id="RHEA-COMP:9683"/>
        <dbReference type="ChEBI" id="CHEBI:30616"/>
        <dbReference type="ChEBI" id="CHEBI:33019"/>
        <dbReference type="ChEBI" id="CHEBI:57305"/>
        <dbReference type="ChEBI" id="CHEBI:78442"/>
        <dbReference type="ChEBI" id="CHEBI:78522"/>
        <dbReference type="ChEBI" id="CHEBI:456215"/>
        <dbReference type="EC" id="6.1.1.14"/>
    </reaction>
</comment>
<comment type="subunit">
    <text evidence="1">Tetramer of two alpha and two beta subunits.</text>
</comment>
<comment type="subcellular location">
    <subcellularLocation>
        <location evidence="1">Cytoplasm</location>
    </subcellularLocation>
</comment>
<comment type="similarity">
    <text evidence="1">Belongs to the class-II aminoacyl-tRNA synthetase family.</text>
</comment>
<reference key="1">
    <citation type="journal article" date="2009" name="Proc. Natl. Acad. Sci. U.S.A.">
        <title>Hamiltonella defensa, genome evolution of protective bacterial endosymbiont from pathogenic ancestors.</title>
        <authorList>
            <person name="Degnan P.H."/>
            <person name="Yu Y."/>
            <person name="Sisneros N."/>
            <person name="Wing R.A."/>
            <person name="Moran N.A."/>
        </authorList>
    </citation>
    <scope>NUCLEOTIDE SEQUENCE [LARGE SCALE GENOMIC DNA]</scope>
    <source>
        <strain>5AT</strain>
    </source>
</reference>
<evidence type="ECO:0000255" key="1">
    <source>
        <dbReference type="HAMAP-Rule" id="MF_00255"/>
    </source>
</evidence>
<feature type="chain" id="PRO_1000204606" description="Glycine--tRNA ligase beta subunit">
    <location>
        <begin position="1"/>
        <end position="689"/>
    </location>
</feature>
<name>SYGB_HAMD5</name>
<dbReference type="EC" id="6.1.1.14" evidence="1"/>
<dbReference type="EMBL" id="CP001277">
    <property type="protein sequence ID" value="ACQ67353.1"/>
    <property type="molecule type" value="Genomic_DNA"/>
</dbReference>
<dbReference type="RefSeq" id="WP_015873177.1">
    <property type="nucleotide sequence ID" value="NC_012751.1"/>
</dbReference>
<dbReference type="SMR" id="C4K460"/>
<dbReference type="STRING" id="572265.HDEF_0612"/>
<dbReference type="GeneID" id="66260483"/>
<dbReference type="KEGG" id="hde:HDEF_0612"/>
<dbReference type="eggNOG" id="COG0751">
    <property type="taxonomic scope" value="Bacteria"/>
</dbReference>
<dbReference type="HOGENOM" id="CLU_007220_2_2_6"/>
<dbReference type="Proteomes" id="UP000002334">
    <property type="component" value="Chromosome"/>
</dbReference>
<dbReference type="GO" id="GO:0005829">
    <property type="term" value="C:cytosol"/>
    <property type="evidence" value="ECO:0007669"/>
    <property type="project" value="TreeGrafter"/>
</dbReference>
<dbReference type="GO" id="GO:0004814">
    <property type="term" value="F:arginine-tRNA ligase activity"/>
    <property type="evidence" value="ECO:0007669"/>
    <property type="project" value="InterPro"/>
</dbReference>
<dbReference type="GO" id="GO:0005524">
    <property type="term" value="F:ATP binding"/>
    <property type="evidence" value="ECO:0007669"/>
    <property type="project" value="UniProtKB-UniRule"/>
</dbReference>
<dbReference type="GO" id="GO:0004820">
    <property type="term" value="F:glycine-tRNA ligase activity"/>
    <property type="evidence" value="ECO:0007669"/>
    <property type="project" value="UniProtKB-UniRule"/>
</dbReference>
<dbReference type="GO" id="GO:0006420">
    <property type="term" value="P:arginyl-tRNA aminoacylation"/>
    <property type="evidence" value="ECO:0007669"/>
    <property type="project" value="InterPro"/>
</dbReference>
<dbReference type="GO" id="GO:0006426">
    <property type="term" value="P:glycyl-tRNA aminoacylation"/>
    <property type="evidence" value="ECO:0007669"/>
    <property type="project" value="UniProtKB-UniRule"/>
</dbReference>
<dbReference type="HAMAP" id="MF_00255">
    <property type="entry name" value="Gly_tRNA_synth_beta"/>
    <property type="match status" value="1"/>
</dbReference>
<dbReference type="InterPro" id="IPR008909">
    <property type="entry name" value="DALR_anticod-bd"/>
</dbReference>
<dbReference type="InterPro" id="IPR015944">
    <property type="entry name" value="Gly-tRNA-synth_bsu"/>
</dbReference>
<dbReference type="InterPro" id="IPR006194">
    <property type="entry name" value="Gly-tRNA-synth_heterodimer"/>
</dbReference>
<dbReference type="NCBIfam" id="TIGR00211">
    <property type="entry name" value="glyS"/>
    <property type="match status" value="1"/>
</dbReference>
<dbReference type="PANTHER" id="PTHR30075:SF2">
    <property type="entry name" value="GLYCINE--TRNA LIGASE, CHLOROPLASTIC_MITOCHONDRIAL 2"/>
    <property type="match status" value="1"/>
</dbReference>
<dbReference type="PANTHER" id="PTHR30075">
    <property type="entry name" value="GLYCYL-TRNA SYNTHETASE"/>
    <property type="match status" value="1"/>
</dbReference>
<dbReference type="Pfam" id="PF05746">
    <property type="entry name" value="DALR_1"/>
    <property type="match status" value="1"/>
</dbReference>
<dbReference type="Pfam" id="PF02092">
    <property type="entry name" value="tRNA_synt_2f"/>
    <property type="match status" value="1"/>
</dbReference>
<dbReference type="PRINTS" id="PR01045">
    <property type="entry name" value="TRNASYNTHGB"/>
</dbReference>
<dbReference type="SUPFAM" id="SSF109604">
    <property type="entry name" value="HD-domain/PDEase-like"/>
    <property type="match status" value="1"/>
</dbReference>
<dbReference type="PROSITE" id="PS50861">
    <property type="entry name" value="AA_TRNA_LIGASE_II_GLYAB"/>
    <property type="match status" value="1"/>
</dbReference>